<accession>Q18493</accession>
<evidence type="ECO:0000250" key="1"/>
<evidence type="ECO:0000250" key="2">
    <source>
        <dbReference type="UniProtKB" id="Q9M9P3"/>
    </source>
</evidence>
<evidence type="ECO:0000305" key="3"/>
<keyword id="KW-0963">Cytoplasm</keyword>
<keyword id="KW-0548">Nucleotidyltransferase</keyword>
<keyword id="KW-1185">Reference proteome</keyword>
<keyword id="KW-0808">Transferase</keyword>
<name>UAP1_CAEEL</name>
<dbReference type="EC" id="2.7.7.23"/>
<dbReference type="EMBL" id="Z66495">
    <property type="protein sequence ID" value="CAA91270.2"/>
    <property type="molecule type" value="Genomic_DNA"/>
</dbReference>
<dbReference type="PIR" id="T19764">
    <property type="entry name" value="T19764"/>
</dbReference>
<dbReference type="RefSeq" id="NP_497777.1">
    <property type="nucleotide sequence ID" value="NM_065376.6"/>
</dbReference>
<dbReference type="SMR" id="Q18493"/>
<dbReference type="BioGRID" id="40735">
    <property type="interactions" value="18"/>
</dbReference>
<dbReference type="FunCoup" id="Q18493">
    <property type="interactions" value="2309"/>
</dbReference>
<dbReference type="STRING" id="6239.C36A4.4.1"/>
<dbReference type="PaxDb" id="6239-C36A4.4"/>
<dbReference type="PeptideAtlas" id="Q18493"/>
<dbReference type="EnsemblMetazoa" id="C36A4.4.1">
    <property type="protein sequence ID" value="C36A4.4.1"/>
    <property type="gene ID" value="WBGene00007965"/>
</dbReference>
<dbReference type="GeneID" id="175497"/>
<dbReference type="KEGG" id="cel:CELE_C36A4.4"/>
<dbReference type="UCSC" id="C36A4.4.1">
    <property type="organism name" value="c. elegans"/>
</dbReference>
<dbReference type="AGR" id="WB:WBGene00007965"/>
<dbReference type="CTD" id="175497"/>
<dbReference type="WormBase" id="C36A4.4">
    <property type="protein sequence ID" value="CE27831"/>
    <property type="gene ID" value="WBGene00007965"/>
</dbReference>
<dbReference type="eggNOG" id="KOG2388">
    <property type="taxonomic scope" value="Eukaryota"/>
</dbReference>
<dbReference type="GeneTree" id="ENSGT00940000153464"/>
<dbReference type="HOGENOM" id="CLU_025603_1_1_1"/>
<dbReference type="InParanoid" id="Q18493"/>
<dbReference type="OMA" id="YFQVDNP"/>
<dbReference type="OrthoDB" id="532420at2759"/>
<dbReference type="PhylomeDB" id="Q18493"/>
<dbReference type="Reactome" id="R-CEL-446210">
    <property type="pathway name" value="Synthesis of UDP-N-acetyl-glucosamine"/>
</dbReference>
<dbReference type="UniPathway" id="UPA00113">
    <property type="reaction ID" value="UER00533"/>
</dbReference>
<dbReference type="PRO" id="PR:Q18493"/>
<dbReference type="Proteomes" id="UP000001940">
    <property type="component" value="Chromosome III"/>
</dbReference>
<dbReference type="Bgee" id="WBGene00007965">
    <property type="expression patterns" value="Expressed in adult organism and 3 other cell types or tissues"/>
</dbReference>
<dbReference type="GO" id="GO:0005737">
    <property type="term" value="C:cytoplasm"/>
    <property type="evidence" value="ECO:0007669"/>
    <property type="project" value="UniProtKB-SubCell"/>
</dbReference>
<dbReference type="GO" id="GO:0070569">
    <property type="term" value="F:uridylyltransferase activity"/>
    <property type="evidence" value="ECO:0007669"/>
    <property type="project" value="InterPro"/>
</dbReference>
<dbReference type="CDD" id="cd04193">
    <property type="entry name" value="UDPGlcNAc_PPase"/>
    <property type="match status" value="1"/>
</dbReference>
<dbReference type="Gene3D" id="3.90.550.10">
    <property type="entry name" value="Spore Coat Polysaccharide Biosynthesis Protein SpsA, Chain A"/>
    <property type="match status" value="1"/>
</dbReference>
<dbReference type="InterPro" id="IPR029044">
    <property type="entry name" value="Nucleotide-diphossugar_trans"/>
</dbReference>
<dbReference type="InterPro" id="IPR039741">
    <property type="entry name" value="UDP-sugar_pyrophosphorylase"/>
</dbReference>
<dbReference type="InterPro" id="IPR002618">
    <property type="entry name" value="UDPGP_fam"/>
</dbReference>
<dbReference type="PANTHER" id="PTHR11952:SF2">
    <property type="entry name" value="LD24639P"/>
    <property type="match status" value="1"/>
</dbReference>
<dbReference type="PANTHER" id="PTHR11952">
    <property type="entry name" value="UDP- GLUCOSE PYROPHOSPHORYLASE"/>
    <property type="match status" value="1"/>
</dbReference>
<dbReference type="Pfam" id="PF01704">
    <property type="entry name" value="UDPGP"/>
    <property type="match status" value="1"/>
</dbReference>
<dbReference type="SUPFAM" id="SSF53448">
    <property type="entry name" value="Nucleotide-diphospho-sugar transferases"/>
    <property type="match status" value="1"/>
</dbReference>
<reference key="1">
    <citation type="journal article" date="1998" name="Science">
        <title>Genome sequence of the nematode C. elegans: a platform for investigating biology.</title>
        <authorList>
            <consortium name="The C. elegans sequencing consortium"/>
        </authorList>
    </citation>
    <scope>NUCLEOTIDE SEQUENCE [LARGE SCALE GENOMIC DNA]</scope>
    <source>
        <strain>Bristol N2</strain>
    </source>
</reference>
<organism>
    <name type="scientific">Caenorhabditis elegans</name>
    <dbReference type="NCBI Taxonomy" id="6239"/>
    <lineage>
        <taxon>Eukaryota</taxon>
        <taxon>Metazoa</taxon>
        <taxon>Ecdysozoa</taxon>
        <taxon>Nematoda</taxon>
        <taxon>Chromadorea</taxon>
        <taxon>Rhabditida</taxon>
        <taxon>Rhabditina</taxon>
        <taxon>Rhabditomorpha</taxon>
        <taxon>Rhabditoidea</taxon>
        <taxon>Rhabditidae</taxon>
        <taxon>Peloderinae</taxon>
        <taxon>Caenorhabditis</taxon>
    </lineage>
</organism>
<proteinExistence type="inferred from homology"/>
<feature type="chain" id="PRO_0000185769" description="Probable UDP-N-acetylglucosamine pyrophosphorylase">
    <location>
        <begin position="1"/>
        <end position="484"/>
    </location>
</feature>
<feature type="short sequence motif" description="Substrate binding" evidence="1">
    <location>
        <begin position="107"/>
        <end position="110"/>
    </location>
</feature>
<feature type="short sequence motif" description="Substrate binding" evidence="1">
    <location>
        <begin position="304"/>
        <end position="305"/>
    </location>
</feature>
<feature type="binding site" evidence="2">
    <location>
        <begin position="107"/>
        <end position="110"/>
    </location>
    <ligand>
        <name>UTP</name>
        <dbReference type="ChEBI" id="CHEBI:46398"/>
    </ligand>
</feature>
<feature type="binding site" evidence="2">
    <location>
        <position position="121"/>
    </location>
    <ligand>
        <name>UTP</name>
        <dbReference type="ChEBI" id="CHEBI:46398"/>
    </ligand>
</feature>
<feature type="binding site" evidence="2">
    <location>
        <position position="200"/>
    </location>
    <ligand>
        <name>UTP</name>
        <dbReference type="ChEBI" id="CHEBI:46398"/>
    </ligand>
</feature>
<feature type="binding site" evidence="2">
    <location>
        <position position="226"/>
    </location>
    <ligand>
        <name>UTP</name>
        <dbReference type="ChEBI" id="CHEBI:46398"/>
    </ligand>
</feature>
<feature type="binding site" evidence="1">
    <location>
        <position position="227"/>
    </location>
    <ligand>
        <name>substrate</name>
    </ligand>
</feature>
<feature type="binding site" evidence="2">
    <location>
        <position position="255"/>
    </location>
    <ligand>
        <name>UTP</name>
        <dbReference type="ChEBI" id="CHEBI:46398"/>
    </ligand>
</feature>
<feature type="binding site" evidence="2">
    <location>
        <position position="377"/>
    </location>
    <ligand>
        <name>UTP</name>
        <dbReference type="ChEBI" id="CHEBI:46398"/>
    </ligand>
</feature>
<feature type="binding site" evidence="1">
    <location>
        <position position="407"/>
    </location>
    <ligand>
        <name>substrate</name>
    </ligand>
</feature>
<sequence length="484" mass="53497">MTITAPPKDEIISKFPGSEPLLNFYNELSDAEKSKLFHQISTLNLSEAHQWFIDSADQRAPSTAEDLKPVLDSQHFVQAELHQVILDGLWNKGMDAIGRGEVCAIVLAGGQATRLGSSQPKGTIPLGINASFGDSLLGIQAAKIALLQALAGEREHQNPGKIHWAVMTSPGTEEATREHVKKLAAHHGFDFDEQITIFSQDEIAAYDEQGNFLLGTKGSVVAAPNGNGGLYSAISAHLPRLRAKGIKYFHVYCVDNILCKVADPHFIGFAISNEADVATKCVPKQKGELVGSVCLDRGLPRVVEYSELGAELAEQKTPDGKYLFGAGSIANHFFTMDFMDRVCSPSSRLPYHRAHKKISYVNEQGTIVKPEKPNGIKLEQFIFDVFELSKRFFIWEVARNEEFSPLKNAQSVGTDCLSTCQRDLSNVNKLWLERVQAKVTATEKPIYLKTIVSYNGENLQELRHREISDSALESDHSINKFFVV</sequence>
<comment type="catalytic activity">
    <reaction>
        <text>N-acetyl-alpha-D-glucosamine 1-phosphate + UTP + H(+) = UDP-N-acetyl-alpha-D-glucosamine + diphosphate</text>
        <dbReference type="Rhea" id="RHEA:13509"/>
        <dbReference type="ChEBI" id="CHEBI:15378"/>
        <dbReference type="ChEBI" id="CHEBI:33019"/>
        <dbReference type="ChEBI" id="CHEBI:46398"/>
        <dbReference type="ChEBI" id="CHEBI:57705"/>
        <dbReference type="ChEBI" id="CHEBI:57776"/>
        <dbReference type="EC" id="2.7.7.23"/>
    </reaction>
</comment>
<comment type="pathway">
    <text>Nucleotide-sugar biosynthesis; UDP-N-acetyl-alpha-D-glucosamine biosynthesis; UDP-N-acetyl-alpha-D-glucosamine from N-acetyl-alpha-D-glucosamine 1-phosphate: step 1/1.</text>
</comment>
<comment type="subcellular location">
    <subcellularLocation>
        <location evidence="1">Cytoplasm</location>
    </subcellularLocation>
</comment>
<comment type="similarity">
    <text evidence="3">Belongs to the UDPGP type 1 family.</text>
</comment>
<gene>
    <name type="ORF">C36A4.4</name>
</gene>
<protein>
    <recommendedName>
        <fullName>Probable UDP-N-acetylglucosamine pyrophosphorylase</fullName>
        <ecNumber>2.7.7.23</ecNumber>
    </recommendedName>
</protein>